<sequence>MEKFTKLTGIAAPMPLVNIDTDMIIPKQFLKTIKRSGLGVNLFDEMRYDRQGNENPDFVLNKPQYRDAQILVTGENFGCGSSREHAPWALLDFGIRCVIAPSFADIFYNNCFKNGILPIALPQEEVDKLMDDAARGANATVTVDLENQTISGPDGGTISFEVDAFKKHCLLNGLDDIGLSLEKVASIDAFEAQASAARPWV</sequence>
<proteinExistence type="inferred from homology"/>
<reference key="1">
    <citation type="journal article" date="2010" name="ISME J.">
        <title>The complete genome sequence of the algal symbiont Dinoroseobacter shibae: a hitchhiker's guide to life in the sea.</title>
        <authorList>
            <person name="Wagner-Dobler I."/>
            <person name="Ballhausen B."/>
            <person name="Berger M."/>
            <person name="Brinkhoff T."/>
            <person name="Buchholz I."/>
            <person name="Bunk B."/>
            <person name="Cypionka H."/>
            <person name="Daniel R."/>
            <person name="Drepper T."/>
            <person name="Gerdts G."/>
            <person name="Hahnke S."/>
            <person name="Han C."/>
            <person name="Jahn D."/>
            <person name="Kalhoefer D."/>
            <person name="Kiss H."/>
            <person name="Klenk H.P."/>
            <person name="Kyrpides N."/>
            <person name="Liebl W."/>
            <person name="Liesegang H."/>
            <person name="Meincke L."/>
            <person name="Pati A."/>
            <person name="Petersen J."/>
            <person name="Piekarski T."/>
            <person name="Pommerenke C."/>
            <person name="Pradella S."/>
            <person name="Pukall R."/>
            <person name="Rabus R."/>
            <person name="Stackebrandt E."/>
            <person name="Thole S."/>
            <person name="Thompson L."/>
            <person name="Tielen P."/>
            <person name="Tomasch J."/>
            <person name="von Jan M."/>
            <person name="Wanphrut N."/>
            <person name="Wichels A."/>
            <person name="Zech H."/>
            <person name="Simon M."/>
        </authorList>
    </citation>
    <scope>NUCLEOTIDE SEQUENCE [LARGE SCALE GENOMIC DNA]</scope>
    <source>
        <strain>DSM 16493 / NCIMB 14021 / DFL 12</strain>
    </source>
</reference>
<feature type="chain" id="PRO_1000084250" description="3-isopropylmalate dehydratase small subunit">
    <location>
        <begin position="1"/>
        <end position="201"/>
    </location>
</feature>
<dbReference type="EC" id="4.2.1.33" evidence="1"/>
<dbReference type="EMBL" id="CP000830">
    <property type="protein sequence ID" value="ABV91832.1"/>
    <property type="molecule type" value="Genomic_DNA"/>
</dbReference>
<dbReference type="RefSeq" id="WP_012176765.1">
    <property type="nucleotide sequence ID" value="NC_009952.1"/>
</dbReference>
<dbReference type="SMR" id="A8LKI9"/>
<dbReference type="STRING" id="398580.Dshi_0083"/>
<dbReference type="KEGG" id="dsh:Dshi_0083"/>
<dbReference type="eggNOG" id="COG0066">
    <property type="taxonomic scope" value="Bacteria"/>
</dbReference>
<dbReference type="HOGENOM" id="CLU_081378_0_3_5"/>
<dbReference type="OrthoDB" id="9777465at2"/>
<dbReference type="UniPathway" id="UPA00048">
    <property type="reaction ID" value="UER00071"/>
</dbReference>
<dbReference type="Proteomes" id="UP000006833">
    <property type="component" value="Chromosome"/>
</dbReference>
<dbReference type="GO" id="GO:0009316">
    <property type="term" value="C:3-isopropylmalate dehydratase complex"/>
    <property type="evidence" value="ECO:0007669"/>
    <property type="project" value="InterPro"/>
</dbReference>
<dbReference type="GO" id="GO:0003861">
    <property type="term" value="F:3-isopropylmalate dehydratase activity"/>
    <property type="evidence" value="ECO:0007669"/>
    <property type="project" value="UniProtKB-UniRule"/>
</dbReference>
<dbReference type="GO" id="GO:0009098">
    <property type="term" value="P:L-leucine biosynthetic process"/>
    <property type="evidence" value="ECO:0007669"/>
    <property type="project" value="UniProtKB-UniRule"/>
</dbReference>
<dbReference type="CDD" id="cd01577">
    <property type="entry name" value="IPMI_Swivel"/>
    <property type="match status" value="1"/>
</dbReference>
<dbReference type="FunFam" id="3.20.19.10:FF:000003">
    <property type="entry name" value="3-isopropylmalate dehydratase small subunit"/>
    <property type="match status" value="1"/>
</dbReference>
<dbReference type="Gene3D" id="3.20.19.10">
    <property type="entry name" value="Aconitase, domain 4"/>
    <property type="match status" value="1"/>
</dbReference>
<dbReference type="HAMAP" id="MF_01031">
    <property type="entry name" value="LeuD_type1"/>
    <property type="match status" value="1"/>
</dbReference>
<dbReference type="InterPro" id="IPR004431">
    <property type="entry name" value="3-IsopropMal_deHydase_ssu"/>
</dbReference>
<dbReference type="InterPro" id="IPR015928">
    <property type="entry name" value="Aconitase/3IPM_dehydase_swvl"/>
</dbReference>
<dbReference type="InterPro" id="IPR000573">
    <property type="entry name" value="AconitaseA/IPMdHydase_ssu_swvl"/>
</dbReference>
<dbReference type="InterPro" id="IPR033940">
    <property type="entry name" value="IPMI_Swivel"/>
</dbReference>
<dbReference type="InterPro" id="IPR050075">
    <property type="entry name" value="LeuD"/>
</dbReference>
<dbReference type="NCBIfam" id="TIGR00171">
    <property type="entry name" value="leuD"/>
    <property type="match status" value="1"/>
</dbReference>
<dbReference type="NCBIfam" id="NF002458">
    <property type="entry name" value="PRK01641.1"/>
    <property type="match status" value="1"/>
</dbReference>
<dbReference type="PANTHER" id="PTHR43345:SF5">
    <property type="entry name" value="3-ISOPROPYLMALATE DEHYDRATASE SMALL SUBUNIT"/>
    <property type="match status" value="1"/>
</dbReference>
<dbReference type="PANTHER" id="PTHR43345">
    <property type="entry name" value="3-ISOPROPYLMALATE DEHYDRATASE SMALL SUBUNIT 2-RELATED-RELATED"/>
    <property type="match status" value="1"/>
</dbReference>
<dbReference type="Pfam" id="PF00694">
    <property type="entry name" value="Aconitase_C"/>
    <property type="match status" value="1"/>
</dbReference>
<dbReference type="SUPFAM" id="SSF52016">
    <property type="entry name" value="LeuD/IlvD-like"/>
    <property type="match status" value="1"/>
</dbReference>
<protein>
    <recommendedName>
        <fullName evidence="1">3-isopropylmalate dehydratase small subunit</fullName>
        <ecNumber evidence="1">4.2.1.33</ecNumber>
    </recommendedName>
    <alternativeName>
        <fullName evidence="1">Alpha-IPM isomerase</fullName>
        <shortName evidence="1">IPMI</shortName>
    </alternativeName>
    <alternativeName>
        <fullName evidence="1">Isopropylmalate isomerase</fullName>
    </alternativeName>
</protein>
<comment type="function">
    <text evidence="1">Catalyzes the isomerization between 2-isopropylmalate and 3-isopropylmalate, via the formation of 2-isopropylmaleate.</text>
</comment>
<comment type="catalytic activity">
    <reaction evidence="1">
        <text>(2R,3S)-3-isopropylmalate = (2S)-2-isopropylmalate</text>
        <dbReference type="Rhea" id="RHEA:32287"/>
        <dbReference type="ChEBI" id="CHEBI:1178"/>
        <dbReference type="ChEBI" id="CHEBI:35121"/>
        <dbReference type="EC" id="4.2.1.33"/>
    </reaction>
</comment>
<comment type="pathway">
    <text evidence="1">Amino-acid biosynthesis; L-leucine biosynthesis; L-leucine from 3-methyl-2-oxobutanoate: step 2/4.</text>
</comment>
<comment type="subunit">
    <text evidence="1">Heterodimer of LeuC and LeuD.</text>
</comment>
<comment type="similarity">
    <text evidence="1">Belongs to the LeuD family. LeuD type 1 subfamily.</text>
</comment>
<accession>A8LKI9</accession>
<gene>
    <name evidence="1" type="primary">leuD</name>
    <name type="ordered locus">Dshi_0083</name>
</gene>
<evidence type="ECO:0000255" key="1">
    <source>
        <dbReference type="HAMAP-Rule" id="MF_01031"/>
    </source>
</evidence>
<name>LEUD_DINSH</name>
<keyword id="KW-0028">Amino-acid biosynthesis</keyword>
<keyword id="KW-0100">Branched-chain amino acid biosynthesis</keyword>
<keyword id="KW-0432">Leucine biosynthesis</keyword>
<keyword id="KW-0456">Lyase</keyword>
<keyword id="KW-1185">Reference proteome</keyword>
<organism>
    <name type="scientific">Dinoroseobacter shibae (strain DSM 16493 / NCIMB 14021 / DFL 12)</name>
    <dbReference type="NCBI Taxonomy" id="398580"/>
    <lineage>
        <taxon>Bacteria</taxon>
        <taxon>Pseudomonadati</taxon>
        <taxon>Pseudomonadota</taxon>
        <taxon>Alphaproteobacteria</taxon>
        <taxon>Rhodobacterales</taxon>
        <taxon>Roseobacteraceae</taxon>
        <taxon>Dinoroseobacter</taxon>
    </lineage>
</organism>